<organism>
    <name type="scientific">Staphylococcus aureus</name>
    <dbReference type="NCBI Taxonomy" id="1280"/>
    <lineage>
        <taxon>Bacteria</taxon>
        <taxon>Bacillati</taxon>
        <taxon>Bacillota</taxon>
        <taxon>Bacilli</taxon>
        <taxon>Bacillales</taxon>
        <taxon>Staphylococcaceae</taxon>
        <taxon>Staphylococcus</taxon>
    </lineage>
</organism>
<name>SARA_STAAU</name>
<accession>P0C1U6</accession>
<accession>Q200K0</accession>
<accession>Q53600</accession>
<accession>Q53777</accession>
<dbReference type="EMBL" id="AF515775">
    <property type="protein sequence ID" value="AAM74164.1"/>
    <property type="molecule type" value="Genomic_DNA"/>
</dbReference>
<dbReference type="EMBL" id="DQ414117">
    <property type="protein sequence ID" value="ABD73686.1"/>
    <property type="molecule type" value="Genomic_DNA"/>
</dbReference>
<dbReference type="EMBL" id="DQ414116">
    <property type="protein sequence ID" value="ABD73685.1"/>
    <property type="molecule type" value="Genomic_DNA"/>
</dbReference>
<dbReference type="EMBL" id="DQ414115">
    <property type="protein sequence ID" value="ABD73684.1"/>
    <property type="molecule type" value="Genomic_DNA"/>
</dbReference>
<dbReference type="EMBL" id="DQ414114">
    <property type="protein sequence ID" value="ABD73683.1"/>
    <property type="molecule type" value="Genomic_DNA"/>
</dbReference>
<dbReference type="EMBL" id="DQ414113">
    <property type="protein sequence ID" value="ABD73682.1"/>
    <property type="molecule type" value="Genomic_DNA"/>
</dbReference>
<dbReference type="EMBL" id="DQ414112">
    <property type="protein sequence ID" value="ABD73681.1"/>
    <property type="molecule type" value="Genomic_DNA"/>
</dbReference>
<dbReference type="EMBL" id="DQ414111">
    <property type="protein sequence ID" value="ABD73680.1"/>
    <property type="molecule type" value="Genomic_DNA"/>
</dbReference>
<dbReference type="EMBL" id="DQ414110">
    <property type="protein sequence ID" value="ABD73679.1"/>
    <property type="molecule type" value="Genomic_DNA"/>
</dbReference>
<dbReference type="EMBL" id="DQ414109">
    <property type="protein sequence ID" value="ABD73678.1"/>
    <property type="molecule type" value="Genomic_DNA"/>
</dbReference>
<dbReference type="EMBL" id="DQ414108">
    <property type="protein sequence ID" value="ABD73677.1"/>
    <property type="molecule type" value="Genomic_DNA"/>
</dbReference>
<dbReference type="EMBL" id="DQ414107">
    <property type="protein sequence ID" value="ABD73676.1"/>
    <property type="molecule type" value="Genomic_DNA"/>
</dbReference>
<dbReference type="EMBL" id="DQ414106">
    <property type="protein sequence ID" value="ABD73675.1"/>
    <property type="molecule type" value="Genomic_DNA"/>
</dbReference>
<dbReference type="EMBL" id="DQ414105">
    <property type="protein sequence ID" value="ABD73674.1"/>
    <property type="molecule type" value="Genomic_DNA"/>
</dbReference>
<dbReference type="EMBL" id="DQ414104">
    <property type="protein sequence ID" value="ABD73673.1"/>
    <property type="molecule type" value="Genomic_DNA"/>
</dbReference>
<dbReference type="EMBL" id="DQ414103">
    <property type="protein sequence ID" value="ABD73672.1"/>
    <property type="molecule type" value="Genomic_DNA"/>
</dbReference>
<dbReference type="EMBL" id="DQ414102">
    <property type="protein sequence ID" value="ABD73671.1"/>
    <property type="molecule type" value="Genomic_DNA"/>
</dbReference>
<dbReference type="EMBL" id="DQ414101">
    <property type="protein sequence ID" value="ABD73670.1"/>
    <property type="molecule type" value="Genomic_DNA"/>
</dbReference>
<dbReference type="EMBL" id="DQ414100">
    <property type="protein sequence ID" value="ABD73669.1"/>
    <property type="molecule type" value="Genomic_DNA"/>
</dbReference>
<dbReference type="EMBL" id="DQ414099">
    <property type="protein sequence ID" value="ABD73668.1"/>
    <property type="molecule type" value="Genomic_DNA"/>
</dbReference>
<dbReference type="EMBL" id="DQ414098">
    <property type="protein sequence ID" value="ABD73667.1"/>
    <property type="molecule type" value="Genomic_DNA"/>
</dbReference>
<dbReference type="EMBL" id="DQ414097">
    <property type="protein sequence ID" value="ABD73666.1"/>
    <property type="molecule type" value="Genomic_DNA"/>
</dbReference>
<dbReference type="EMBL" id="DQ414096">
    <property type="protein sequence ID" value="ABD73665.1"/>
    <property type="molecule type" value="Genomic_DNA"/>
</dbReference>
<dbReference type="EMBL" id="DQ414095">
    <property type="protein sequence ID" value="ABD73664.1"/>
    <property type="molecule type" value="Genomic_DNA"/>
</dbReference>
<dbReference type="EMBL" id="DQ414094">
    <property type="protein sequence ID" value="ABD73663.1"/>
    <property type="molecule type" value="Genomic_DNA"/>
</dbReference>
<dbReference type="EMBL" id="DQ414093">
    <property type="protein sequence ID" value="ABD73662.1"/>
    <property type="molecule type" value="Genomic_DNA"/>
</dbReference>
<dbReference type="EMBL" id="DQ414092">
    <property type="protein sequence ID" value="ABD73661.1"/>
    <property type="molecule type" value="Genomic_DNA"/>
</dbReference>
<dbReference type="EMBL" id="DQ414091">
    <property type="protein sequence ID" value="ABD73660.1"/>
    <property type="molecule type" value="Genomic_DNA"/>
</dbReference>
<dbReference type="EMBL" id="DQ414090">
    <property type="protein sequence ID" value="ABD73659.1"/>
    <property type="molecule type" value="Genomic_DNA"/>
</dbReference>
<dbReference type="EMBL" id="DQ414089">
    <property type="protein sequence ID" value="ABD73658.1"/>
    <property type="molecule type" value="Genomic_DNA"/>
</dbReference>
<dbReference type="RefSeq" id="WP_001018677.1">
    <property type="nucleotide sequence ID" value="NZ_WYDB01000005.1"/>
</dbReference>
<dbReference type="SMR" id="P0C1U6"/>
<dbReference type="OMA" id="AMITYAD"/>
<dbReference type="PRO" id="PR:P0C1U6"/>
<dbReference type="GO" id="GO:0005737">
    <property type="term" value="C:cytoplasm"/>
    <property type="evidence" value="ECO:0007669"/>
    <property type="project" value="UniProtKB-SubCell"/>
</dbReference>
<dbReference type="GO" id="GO:0003677">
    <property type="term" value="F:DNA binding"/>
    <property type="evidence" value="ECO:0007669"/>
    <property type="project" value="UniProtKB-KW"/>
</dbReference>
<dbReference type="GO" id="GO:0003700">
    <property type="term" value="F:DNA-binding transcription factor activity"/>
    <property type="evidence" value="ECO:0007669"/>
    <property type="project" value="InterPro"/>
</dbReference>
<dbReference type="GO" id="GO:0046872">
    <property type="term" value="F:metal ion binding"/>
    <property type="evidence" value="ECO:0007669"/>
    <property type="project" value="UniProtKB-KW"/>
</dbReference>
<dbReference type="GO" id="GO:0006950">
    <property type="term" value="P:response to stress"/>
    <property type="evidence" value="ECO:0007669"/>
    <property type="project" value="TreeGrafter"/>
</dbReference>
<dbReference type="GO" id="GO:0090609">
    <property type="term" value="P:single-species submerged biofilm formation"/>
    <property type="evidence" value="ECO:0000315"/>
    <property type="project" value="CACAO"/>
</dbReference>
<dbReference type="FunFam" id="1.10.10.10:FF:000541">
    <property type="entry name" value="Transcriptional regulator SarA"/>
    <property type="match status" value="1"/>
</dbReference>
<dbReference type="Gene3D" id="1.10.10.10">
    <property type="entry name" value="Winged helix-like DNA-binding domain superfamily/Winged helix DNA-binding domain"/>
    <property type="match status" value="1"/>
</dbReference>
<dbReference type="InterPro" id="IPR039422">
    <property type="entry name" value="MarR/SlyA-like"/>
</dbReference>
<dbReference type="InterPro" id="IPR010166">
    <property type="entry name" value="SarA/Rot_dom"/>
</dbReference>
<dbReference type="InterPro" id="IPR055166">
    <property type="entry name" value="Transc_reg_Sar_Rot_HTH"/>
</dbReference>
<dbReference type="InterPro" id="IPR036388">
    <property type="entry name" value="WH-like_DNA-bd_sf"/>
</dbReference>
<dbReference type="InterPro" id="IPR036390">
    <property type="entry name" value="WH_DNA-bd_sf"/>
</dbReference>
<dbReference type="NCBIfam" id="TIGR01889">
    <property type="entry name" value="Staph_reg_Sar"/>
    <property type="match status" value="1"/>
</dbReference>
<dbReference type="NCBIfam" id="NF038268">
    <property type="entry name" value="TF_SarA"/>
    <property type="match status" value="1"/>
</dbReference>
<dbReference type="PANTHER" id="PTHR33164:SF5">
    <property type="entry name" value="ORGANIC HYDROPEROXIDE RESISTANCE TRANSCRIPTIONAL REGULATOR"/>
    <property type="match status" value="1"/>
</dbReference>
<dbReference type="PANTHER" id="PTHR33164">
    <property type="entry name" value="TRANSCRIPTIONAL REGULATOR, MARR FAMILY"/>
    <property type="match status" value="1"/>
</dbReference>
<dbReference type="Pfam" id="PF22381">
    <property type="entry name" value="Staph_reg_Sar_Rot"/>
    <property type="match status" value="1"/>
</dbReference>
<dbReference type="SUPFAM" id="SSF46785">
    <property type="entry name" value="Winged helix' DNA-binding domain"/>
    <property type="match status" value="1"/>
</dbReference>
<comment type="function">
    <text evidence="4">Global regulator with both positive and negative effects that controls expression of several virulence factors and biofilm formation process in a cell density-dependent manner. In a strain-dependent manner plays a role in multidrug resistance mechanism. Is required for transcription of primary transcripts RNAII and RNAIII generated by agr (virulence accessory gene regulator) locus. Acts as a transcriptional activator of the genes encoding, among others, for fibronectin binding proteins (fnbA and fnbB), hemolysins (hla, hld, hlgB and hlgC), serine proteases (splA, splB, splD and splF) and of the bap gene, which is essential for biofilm development in some strains. Negatively regulates the expression of the genes for protein A (spa), lipase (lip), thermonuclease (nuc), immunodominant staphylococcal antigen B (isaB), staphylococcal serine and cysteine proteases (sspA and sspB), staphostatin B (sspC), metalloprotease aureolysin (aur) and collagen adhesin (cna). Probably activates the development of biofilm by both enhancing the ica operon transcription and suppressing the transcription of either a protein involved in the turnover of PIA/PNAG or a repressor of its synthesis, whose expression would be sigma-B-dependent.</text>
</comment>
<comment type="subunit">
    <text evidence="2 3">Homodimer.</text>
</comment>
<comment type="subcellular location">
    <subcellularLocation>
        <location>Cytoplasm</location>
    </subcellularLocation>
</comment>
<comment type="induction">
    <text>Expressed at the exponential growth phase and maximally induced during the transition from late exponential phase to stationary phase. Repressed by SarR and activated by two-component regulatory system ArlS/ArlR. Activated by SigB in strains harboring an intact sigB operon (rsbU, rsbV, rsbW, and sigB). Transcription is also attenuated by MsrR.</text>
</comment>
<comment type="miscellaneous">
    <text>Can regulate transcription of some virulence factors (hemolysins, staphylococcal serine and cysteine proteases, lipase, protein A and metalloprotease aureolysin) via either agr-dependent and/or agr-independent pathway. Agr and SarA have opposing effects on the expression of sspA, sspB, sspC, lip and aur.</text>
</comment>
<comment type="similarity">
    <text evidence="5">Belongs to the SarA family.</text>
</comment>
<feature type="initiator methionine" description="Removed" evidence="1">
    <location>
        <position position="1"/>
    </location>
</feature>
<feature type="chain" id="PRO_0000219576" description="Transcriptional regulator SarA">
    <location>
        <begin position="2"/>
        <end position="124"/>
    </location>
</feature>
<feature type="binding site" evidence="1">
    <location>
        <position position="7"/>
    </location>
    <ligand>
        <name>a divalent metal cation</name>
        <dbReference type="ChEBI" id="CHEBI:60240"/>
    </ligand>
</feature>
<feature type="binding site" evidence="1">
    <location>
        <position position="8"/>
    </location>
    <ligand>
        <name>a divalent metal cation</name>
        <dbReference type="ChEBI" id="CHEBI:60240"/>
    </ligand>
</feature>
<feature type="binding site" evidence="1">
    <location>
        <position position="11"/>
    </location>
    <ligand>
        <name>a divalent metal cation</name>
        <dbReference type="ChEBI" id="CHEBI:60240"/>
    </ligand>
</feature>
<protein>
    <recommendedName>
        <fullName>Transcriptional regulator SarA</fullName>
    </recommendedName>
    <alternativeName>
        <fullName>Staphylococcal accessory regulator A</fullName>
    </alternativeName>
</protein>
<reference key="1">
    <citation type="submission" date="2002-05" db="EMBL/GenBank/DDBJ databases">
        <authorList>
            <person name="Shawcross S.G."/>
            <person name="Edwards-Jones V."/>
            <person name="Dawson M.M."/>
            <person name="Foster H.A."/>
        </authorList>
    </citation>
    <scope>NUCLEOTIDE SEQUENCE [GENOMIC DNA]</scope>
</reference>
<reference key="2">
    <citation type="journal article" date="2006" name="Microbiology">
        <title>The phylogeny of Staphylococcus aureus -- which genes make the best intra-species markers?</title>
        <authorList>
            <person name="Cooper J.E."/>
            <person name="Feil E.J."/>
        </authorList>
    </citation>
    <scope>NUCLEOTIDE SEQUENCE [GENOMIC DNA] OF 16-113</scope>
    <source>
        <strain>C101</strain>
        <strain>C2</strain>
        <strain>C437</strain>
        <strain>C640</strain>
        <strain>C720</strain>
        <strain>D17</strain>
        <strain>D22</strain>
        <strain>D274</strain>
        <strain>D365</strain>
        <strain>D456</strain>
        <strain>D470</strain>
        <strain>D535</strain>
        <strain>D547</strain>
        <strain>D97</strain>
        <strain>EMRSA3</strain>
        <strain>EMRSA4</strain>
        <strain>EMRSA9</strain>
        <strain>H116</strain>
        <strain>H19</strain>
        <strain>H295</strain>
        <strain>H402</strain>
        <strain>H417</strain>
        <strain>H466</strain>
        <strain>H512</strain>
        <strain>H560</strain>
        <strain>H591</strain>
        <strain>H707</strain>
        <strain>H783</strain>
        <strain>H831</strain>
    </source>
</reference>
<reference key="3">
    <citation type="journal article" date="1999" name="Mol. Microbiol.">
        <title>Characterization of the SarA virulence gene regulator of Staphylococcus aureus.</title>
        <authorList>
            <person name="Rechtin T.M."/>
            <person name="Gillaspy A.F."/>
            <person name="Schumacher M.A."/>
            <person name="Brennan R.G."/>
            <person name="Smeltzer M.S."/>
            <person name="Hurlburt B.K."/>
        </authorList>
    </citation>
    <scope>SUBUNIT</scope>
    <source>
        <strain>DB</strain>
    </source>
</reference>
<reference key="4">
    <citation type="journal article" date="2002" name="Infect. Immun.">
        <title>Strain-dependent differences in the regulatory roles of sarA and agr in Staphylococcus aureus.</title>
        <authorList>
            <person name="Blevins J.S."/>
            <person name="Beenken K.E."/>
            <person name="Elasri M.O."/>
            <person name="Hurlburt B.K."/>
            <person name="Smeltzer M.S."/>
        </authorList>
    </citation>
    <scope>STRAIN-DEPENDENT DIFFERENCES IN REGULATORY FUNCTION</scope>
    <source>
        <strain>Various isolates</strain>
    </source>
</reference>
<reference key="5">
    <citation type="journal article" date="2003" name="Mol. Microbiol.">
        <title>SarA and not sigmaB is essential for biofilm development by Staphylococcus aureus.</title>
        <authorList>
            <person name="Valle J."/>
            <person name="Toledo-Arana A."/>
            <person name="Berasain C."/>
            <person name="Ghigo J.-M."/>
            <person name="Amorena B."/>
            <person name="Penades J.R."/>
            <person name="Lasa I."/>
        </authorList>
    </citation>
    <scope>FUNCTION IN BIOFILM DEVELOPMENT</scope>
    <source>
        <strain>Isolate 15981</strain>
    </source>
</reference>
<reference key="6">
    <citation type="journal article" date="2005" name="J. Proteome Res.">
        <title>Proteome analysis of membrane and cell wall associated proteins from Staphylococcus aureus.</title>
        <authorList>
            <person name="Nandakumar R."/>
            <person name="Nandakumar M.P."/>
            <person name="Marten M.R."/>
            <person name="Ross J.M."/>
        </authorList>
    </citation>
    <scope>IDENTIFICATION BY MASS SPECTROMETRY</scope>
    <source>
        <strain>Phillips</strain>
    </source>
</reference>
<reference key="7">
    <citation type="journal article" date="2001" name="Nature">
        <title>Crystal structures of SarA, a pleiotropic regulator of virulence genes in S. aureus.</title>
        <authorList>
            <person name="Schumacher M.A."/>
            <person name="Hurlburt B.K."/>
            <person name="Brennan R.G."/>
        </authorList>
    </citation>
    <scope>X-RAY CRYSTALLOGRAPHY (2.95 ANGSTROMS) IN COMPLEX WITH DNA</scope>
    <scope>SUBUNIT</scope>
    <source>
        <strain>DB</strain>
    </source>
</reference>
<evidence type="ECO:0000250" key="1"/>
<evidence type="ECO:0000269" key="2">
    <source>
    </source>
</evidence>
<evidence type="ECO:0000269" key="3">
    <source>
    </source>
</evidence>
<evidence type="ECO:0000269" key="4">
    <source>
    </source>
</evidence>
<evidence type="ECO:0000305" key="5"/>
<proteinExistence type="evidence at protein level"/>
<keyword id="KW-0010">Activator</keyword>
<keyword id="KW-0963">Cytoplasm</keyword>
<keyword id="KW-0238">DNA-binding</keyword>
<keyword id="KW-0479">Metal-binding</keyword>
<keyword id="KW-0678">Repressor</keyword>
<keyword id="KW-0804">Transcription</keyword>
<keyword id="KW-0805">Transcription regulation</keyword>
<keyword id="KW-0843">Virulence</keyword>
<sequence length="124" mass="14718">MAITKINDCFELLSMVTYADKLKSLIKKEFSISFEEFAVLTYISENKEKEYYLKDIINHLNYKQPQVVKAVKILSQEDYFDKKRNEHDERTVLILVNAQQRKKIESLLSRVNKRITEANNEIEL</sequence>
<gene>
    <name type="primary">sarA</name>
</gene>